<proteinExistence type="inferred from homology"/>
<comment type="function">
    <text evidence="1">The alpha subunit is responsible for the aldol cleavage of indoleglycerol phosphate to indole and glyceraldehyde 3-phosphate.</text>
</comment>
<comment type="catalytic activity">
    <reaction evidence="1">
        <text>(1S,2R)-1-C-(indol-3-yl)glycerol 3-phosphate + L-serine = D-glyceraldehyde 3-phosphate + L-tryptophan + H2O</text>
        <dbReference type="Rhea" id="RHEA:10532"/>
        <dbReference type="ChEBI" id="CHEBI:15377"/>
        <dbReference type="ChEBI" id="CHEBI:33384"/>
        <dbReference type="ChEBI" id="CHEBI:57912"/>
        <dbReference type="ChEBI" id="CHEBI:58866"/>
        <dbReference type="ChEBI" id="CHEBI:59776"/>
        <dbReference type="EC" id="4.2.1.20"/>
    </reaction>
</comment>
<comment type="pathway">
    <text evidence="1">Amino-acid biosynthesis; L-tryptophan biosynthesis; L-tryptophan from chorismate: step 5/5.</text>
</comment>
<comment type="subunit">
    <text evidence="1">Tetramer of two alpha and two beta chains.</text>
</comment>
<comment type="similarity">
    <text evidence="1">Belongs to the TrpA family.</text>
</comment>
<protein>
    <recommendedName>
        <fullName evidence="1">Tryptophan synthase alpha chain</fullName>
        <ecNumber evidence="1">4.2.1.20</ecNumber>
    </recommendedName>
</protein>
<sequence length="256" mass="28880">MNRINQLFNSNKKDILSIYFCAGNPTLDGTVNVIRTLEKHGVSMIEVGIPFSDPMADGIVIQNAATQALRNGMSLKILFEQLRNIRQEVSIPLVFMGYLNPIMQFGFENFCRKCVECGIDGVIIPDLPFRDYQDHYRIIAERYGIKVIMLITPETSEERVREIDAHTDGFIYMVSSAATTGAQQDFNEQKRAYFKKIEDMNLRNPLMVGFGISNKATFQAACEHASGAIIGSRFVTLLEEEKDPEKAILKLKDALK</sequence>
<accession>Q8AAD8</accession>
<name>TRPA_BACTN</name>
<evidence type="ECO:0000255" key="1">
    <source>
        <dbReference type="HAMAP-Rule" id="MF_00131"/>
    </source>
</evidence>
<organism>
    <name type="scientific">Bacteroides thetaiotaomicron (strain ATCC 29148 / DSM 2079 / JCM 5827 / CCUG 10774 / NCTC 10582 / VPI-5482 / E50)</name>
    <dbReference type="NCBI Taxonomy" id="226186"/>
    <lineage>
        <taxon>Bacteria</taxon>
        <taxon>Pseudomonadati</taxon>
        <taxon>Bacteroidota</taxon>
        <taxon>Bacteroidia</taxon>
        <taxon>Bacteroidales</taxon>
        <taxon>Bacteroidaceae</taxon>
        <taxon>Bacteroides</taxon>
    </lineage>
</organism>
<feature type="chain" id="PRO_0000098745" description="Tryptophan synthase alpha chain">
    <location>
        <begin position="1"/>
        <end position="256"/>
    </location>
</feature>
<feature type="active site" description="Proton acceptor" evidence="1">
    <location>
        <position position="46"/>
    </location>
</feature>
<feature type="active site" description="Proton acceptor" evidence="1">
    <location>
        <position position="57"/>
    </location>
</feature>
<keyword id="KW-0028">Amino-acid biosynthesis</keyword>
<keyword id="KW-0057">Aromatic amino acid biosynthesis</keyword>
<keyword id="KW-0456">Lyase</keyword>
<keyword id="KW-1185">Reference proteome</keyword>
<keyword id="KW-0822">Tryptophan biosynthesis</keyword>
<reference key="1">
    <citation type="journal article" date="2003" name="Science">
        <title>A genomic view of the human-Bacteroides thetaiotaomicron symbiosis.</title>
        <authorList>
            <person name="Xu J."/>
            <person name="Bjursell M.K."/>
            <person name="Himrod J."/>
            <person name="Deng S."/>
            <person name="Carmichael L.K."/>
            <person name="Chiang H.C."/>
            <person name="Hooper L.V."/>
            <person name="Gordon J.I."/>
        </authorList>
    </citation>
    <scope>NUCLEOTIDE SEQUENCE [LARGE SCALE GENOMIC DNA]</scope>
    <source>
        <strain>ATCC 29148 / DSM 2079 / JCM 5827 / CCUG 10774 / NCTC 10582 / VPI-5482 / E50</strain>
    </source>
</reference>
<dbReference type="EC" id="4.2.1.20" evidence="1"/>
<dbReference type="EMBL" id="AE015928">
    <property type="protein sequence ID" value="AAO75634.1"/>
    <property type="molecule type" value="Genomic_DNA"/>
</dbReference>
<dbReference type="RefSeq" id="NP_809440.1">
    <property type="nucleotide sequence ID" value="NC_004663.1"/>
</dbReference>
<dbReference type="RefSeq" id="WP_008765046.1">
    <property type="nucleotide sequence ID" value="NC_004663.1"/>
</dbReference>
<dbReference type="SMR" id="Q8AAD8"/>
<dbReference type="FunCoup" id="Q8AAD8">
    <property type="interactions" value="505"/>
</dbReference>
<dbReference type="STRING" id="226186.BT_0527"/>
<dbReference type="PaxDb" id="226186-BT_0527"/>
<dbReference type="EnsemblBacteria" id="AAO75634">
    <property type="protein sequence ID" value="AAO75634"/>
    <property type="gene ID" value="BT_0527"/>
</dbReference>
<dbReference type="GeneID" id="60926486"/>
<dbReference type="KEGG" id="bth:BT_0527"/>
<dbReference type="PATRIC" id="fig|226186.12.peg.527"/>
<dbReference type="eggNOG" id="COG0159">
    <property type="taxonomic scope" value="Bacteria"/>
</dbReference>
<dbReference type="HOGENOM" id="CLU_016734_0_0_10"/>
<dbReference type="InParanoid" id="Q8AAD8"/>
<dbReference type="OrthoDB" id="9804578at2"/>
<dbReference type="UniPathway" id="UPA00035">
    <property type="reaction ID" value="UER00044"/>
</dbReference>
<dbReference type="Proteomes" id="UP000001414">
    <property type="component" value="Chromosome"/>
</dbReference>
<dbReference type="GO" id="GO:0005829">
    <property type="term" value="C:cytosol"/>
    <property type="evidence" value="ECO:0000318"/>
    <property type="project" value="GO_Central"/>
</dbReference>
<dbReference type="GO" id="GO:0004834">
    <property type="term" value="F:tryptophan synthase activity"/>
    <property type="evidence" value="ECO:0000318"/>
    <property type="project" value="GO_Central"/>
</dbReference>
<dbReference type="GO" id="GO:0000162">
    <property type="term" value="P:L-tryptophan biosynthetic process"/>
    <property type="evidence" value="ECO:0000318"/>
    <property type="project" value="GO_Central"/>
</dbReference>
<dbReference type="CDD" id="cd04724">
    <property type="entry name" value="Tryptophan_synthase_alpha"/>
    <property type="match status" value="1"/>
</dbReference>
<dbReference type="FunFam" id="3.20.20.70:FF:000037">
    <property type="entry name" value="Tryptophan synthase alpha chain"/>
    <property type="match status" value="1"/>
</dbReference>
<dbReference type="Gene3D" id="3.20.20.70">
    <property type="entry name" value="Aldolase class I"/>
    <property type="match status" value="1"/>
</dbReference>
<dbReference type="HAMAP" id="MF_00131">
    <property type="entry name" value="Trp_synth_alpha"/>
    <property type="match status" value="1"/>
</dbReference>
<dbReference type="InterPro" id="IPR013785">
    <property type="entry name" value="Aldolase_TIM"/>
</dbReference>
<dbReference type="InterPro" id="IPR011060">
    <property type="entry name" value="RibuloseP-bd_barrel"/>
</dbReference>
<dbReference type="InterPro" id="IPR018204">
    <property type="entry name" value="Trp_synthase_alpha_AS"/>
</dbReference>
<dbReference type="InterPro" id="IPR002028">
    <property type="entry name" value="Trp_synthase_suA"/>
</dbReference>
<dbReference type="NCBIfam" id="TIGR00262">
    <property type="entry name" value="trpA"/>
    <property type="match status" value="1"/>
</dbReference>
<dbReference type="PANTHER" id="PTHR43406:SF1">
    <property type="entry name" value="TRYPTOPHAN SYNTHASE ALPHA CHAIN, CHLOROPLASTIC"/>
    <property type="match status" value="1"/>
</dbReference>
<dbReference type="PANTHER" id="PTHR43406">
    <property type="entry name" value="TRYPTOPHAN SYNTHASE, ALPHA CHAIN"/>
    <property type="match status" value="1"/>
</dbReference>
<dbReference type="Pfam" id="PF00290">
    <property type="entry name" value="Trp_syntA"/>
    <property type="match status" value="1"/>
</dbReference>
<dbReference type="SUPFAM" id="SSF51366">
    <property type="entry name" value="Ribulose-phoshate binding barrel"/>
    <property type="match status" value="1"/>
</dbReference>
<dbReference type="PROSITE" id="PS00167">
    <property type="entry name" value="TRP_SYNTHASE_ALPHA"/>
    <property type="match status" value="1"/>
</dbReference>
<gene>
    <name evidence="1" type="primary">trpA</name>
    <name type="ordered locus">BT_0527</name>
</gene>